<reference key="1">
    <citation type="journal article" date="1988" name="J. Biol. Chem.">
        <title>Transcriptional mapping and nucleotide sequence of the Escherichia coli fepA-fes enterobactin region. Identification of a unique iron-regulated bidirectional promoter.</title>
        <authorList>
            <person name="Pettis G.S."/>
            <person name="Brickman T.J."/>
            <person name="McIntosh M.A."/>
        </authorList>
    </citation>
    <scope>NUCLEOTIDE SEQUENCE [GENOMIC DNA]</scope>
</reference>
<reference key="2">
    <citation type="journal article" date="1991" name="Biochemistry">
        <title>Biosynthesis of the Escherichia coli siderophore enterobactin: sequence of the entF gene, expression and purification of EntF, and analysis of covalent phosphopantetheine.</title>
        <authorList>
            <person name="Rusnak F."/>
            <person name="Sakaitani M."/>
            <person name="Drueckhammer D."/>
            <person name="Reichert J."/>
            <person name="Walsh C.T."/>
        </authorList>
    </citation>
    <scope>NUCLEOTIDE SEQUENCE [GENOMIC DNA]</scope>
</reference>
<reference key="3">
    <citation type="journal article" date="1997" name="Science">
        <title>The complete genome sequence of Escherichia coli K-12.</title>
        <authorList>
            <person name="Blattner F.R."/>
            <person name="Plunkett G. III"/>
            <person name="Bloch C.A."/>
            <person name="Perna N.T."/>
            <person name="Burland V."/>
            <person name="Riley M."/>
            <person name="Collado-Vides J."/>
            <person name="Glasner J.D."/>
            <person name="Rode C.K."/>
            <person name="Mayhew G.F."/>
            <person name="Gregor J."/>
            <person name="Davis N.W."/>
            <person name="Kirkpatrick H.A."/>
            <person name="Goeden M.A."/>
            <person name="Rose D.J."/>
            <person name="Mau B."/>
            <person name="Shao Y."/>
        </authorList>
    </citation>
    <scope>NUCLEOTIDE SEQUENCE [LARGE SCALE GENOMIC DNA]</scope>
    <source>
        <strain>K12 / MG1655 / ATCC 47076</strain>
    </source>
</reference>
<reference key="4">
    <citation type="journal article" date="2006" name="Mol. Syst. Biol.">
        <title>Highly accurate genome sequences of Escherichia coli K-12 strains MG1655 and W3110.</title>
        <authorList>
            <person name="Hayashi K."/>
            <person name="Morooka N."/>
            <person name="Yamamoto Y."/>
            <person name="Fujita K."/>
            <person name="Isono K."/>
            <person name="Choi S."/>
            <person name="Ohtsubo E."/>
            <person name="Baba T."/>
            <person name="Wanner B.L."/>
            <person name="Mori H."/>
            <person name="Horiuchi T."/>
        </authorList>
    </citation>
    <scope>NUCLEOTIDE SEQUENCE [LARGE SCALE GENOMIC DNA]</scope>
    <source>
        <strain>K12 / W3110 / ATCC 27325 / DSM 5911</strain>
    </source>
</reference>
<reference key="5">
    <citation type="journal article" date="2010" name="Biochemistry">
        <title>MbtH-like proteins as integral components of bacterial nonribosomal peptide synthetases.</title>
        <authorList>
            <person name="Felnagle E.A."/>
            <person name="Barkei J.J."/>
            <person name="Park H."/>
            <person name="Podevels A.M."/>
            <person name="McMahon M.D."/>
            <person name="Drott D.W."/>
            <person name="Thomas M.G."/>
        </authorList>
    </citation>
    <scope>FUNCTION</scope>
    <scope>DISRUPTION PHENOTYPE</scope>
</reference>
<proteinExistence type="evidence at protein level"/>
<feature type="chain" id="PRO_0000168673" description="Enterobactin biosynthesis protein YbdZ">
    <location>
        <begin position="1"/>
        <end position="72"/>
    </location>
</feature>
<feature type="helix" evidence="5">
    <location>
        <begin position="6"/>
        <end position="8"/>
    </location>
</feature>
<feature type="strand" evidence="5">
    <location>
        <begin position="14"/>
        <end position="18"/>
    </location>
</feature>
<feature type="strand" evidence="5">
    <location>
        <begin position="24"/>
        <end position="28"/>
    </location>
</feature>
<feature type="strand" evidence="5">
    <location>
        <begin position="38"/>
        <end position="44"/>
    </location>
</feature>
<feature type="helix" evidence="5">
    <location>
        <begin position="46"/>
        <end position="56"/>
    </location>
</feature>
<feature type="turn" evidence="5">
    <location>
        <begin position="62"/>
        <end position="66"/>
    </location>
</feature>
<sequence length="72" mass="8271">MAFSNPFDDPQGAFYILRNAQGQFSLWPQQCVLPAGWDIVCQPQSQASCQQWLEAHWRTLTPTNFTQLQEAQ</sequence>
<keyword id="KW-0002">3D-structure</keyword>
<keyword id="KW-0259">Enterobactin biosynthesis</keyword>
<keyword id="KW-1185">Reference proteome</keyword>
<comment type="function">
    <text evidence="1">Involved in the biosynthesis of the siderophore enterobactin (enterochelin), which is a macrocyclic trimeric lactone of N-(2,3-dihydroxybenzoyl)-serine. Plays a role in the catalytic function of EntF. It is required for adenylation of amino acids in non-ribosomal peptide biosynthesis.</text>
</comment>
<comment type="disruption phenotype">
    <text evidence="1">Cells lacking this gene are not able to produce enough enterobactin for efficient growth.</text>
</comment>
<comment type="similarity">
    <text evidence="3">Belongs to the MbtH-like family.</text>
</comment>
<organism>
    <name type="scientific">Escherichia coli (strain K12)</name>
    <dbReference type="NCBI Taxonomy" id="83333"/>
    <lineage>
        <taxon>Bacteria</taxon>
        <taxon>Pseudomonadati</taxon>
        <taxon>Pseudomonadota</taxon>
        <taxon>Gammaproteobacteria</taxon>
        <taxon>Enterobacterales</taxon>
        <taxon>Enterobacteriaceae</taxon>
        <taxon>Escherichia</taxon>
    </lineage>
</organism>
<protein>
    <recommendedName>
        <fullName evidence="4">Enterobactin biosynthesis protein YbdZ</fullName>
    </recommendedName>
</protein>
<accession>P18393</accession>
<accession>Q2EEQ6</accession>
<accession>Q2MBL6</accession>
<dbReference type="EMBL" id="J04216">
    <property type="protein sequence ID" value="AAA23758.1"/>
    <property type="molecule type" value="Genomic_DNA"/>
</dbReference>
<dbReference type="EMBL" id="M60177">
    <property type="status" value="NOT_ANNOTATED_CDS"/>
    <property type="molecule type" value="Genomic_DNA"/>
</dbReference>
<dbReference type="EMBL" id="U00096">
    <property type="protein sequence ID" value="ABD18641.1"/>
    <property type="molecule type" value="Genomic_DNA"/>
</dbReference>
<dbReference type="EMBL" id="AP009048">
    <property type="protein sequence ID" value="BAE76340.1"/>
    <property type="molecule type" value="Genomic_DNA"/>
</dbReference>
<dbReference type="PIR" id="B31958">
    <property type="entry name" value="Q3ECFS"/>
</dbReference>
<dbReference type="RefSeq" id="WP_000885798.1">
    <property type="nucleotide sequence ID" value="NZ_SSZK01000032.1"/>
</dbReference>
<dbReference type="RefSeq" id="YP_588441.1">
    <property type="nucleotide sequence ID" value="NC_000913.3"/>
</dbReference>
<dbReference type="PDB" id="5JA1">
    <property type="method" value="X-ray"/>
    <property type="resolution" value="3.00 A"/>
    <property type="chains" value="B=1-72"/>
</dbReference>
<dbReference type="PDBsum" id="5JA1"/>
<dbReference type="SMR" id="P18393"/>
<dbReference type="FunCoup" id="P18393">
    <property type="interactions" value="11"/>
</dbReference>
<dbReference type="IntAct" id="P18393">
    <property type="interactions" value="1"/>
</dbReference>
<dbReference type="STRING" id="511145.b4511"/>
<dbReference type="PaxDb" id="511145-b4511"/>
<dbReference type="EnsemblBacteria" id="ABD18641">
    <property type="protein sequence ID" value="ABD18641"/>
    <property type="gene ID" value="b4511"/>
</dbReference>
<dbReference type="GeneID" id="1450243"/>
<dbReference type="KEGG" id="ecj:JW0577"/>
<dbReference type="KEGG" id="eco:b4511"/>
<dbReference type="KEGG" id="ecoc:C3026_02920"/>
<dbReference type="PATRIC" id="fig|1411691.4.peg.1685"/>
<dbReference type="EchoBASE" id="EB4099"/>
<dbReference type="eggNOG" id="COG3251">
    <property type="taxonomic scope" value="Bacteria"/>
</dbReference>
<dbReference type="HOGENOM" id="CLU_181321_1_0_6"/>
<dbReference type="InParanoid" id="P18393"/>
<dbReference type="OMA" id="QYSLWPG"/>
<dbReference type="OrthoDB" id="7584480at2"/>
<dbReference type="PhylomeDB" id="P18393"/>
<dbReference type="BioCyc" id="EcoCyc:MONOMER0-2659"/>
<dbReference type="PRO" id="PR:P18393"/>
<dbReference type="Proteomes" id="UP000000625">
    <property type="component" value="Chromosome"/>
</dbReference>
<dbReference type="GO" id="GO:0005829">
    <property type="term" value="C:cytosol"/>
    <property type="evidence" value="ECO:0000314"/>
    <property type="project" value="EcoCyc"/>
</dbReference>
<dbReference type="GO" id="GO:0009239">
    <property type="term" value="P:enterobactin biosynthetic process"/>
    <property type="evidence" value="ECO:0000314"/>
    <property type="project" value="EcoCyc"/>
</dbReference>
<dbReference type="GO" id="GO:0019290">
    <property type="term" value="P:siderophore biosynthetic process"/>
    <property type="evidence" value="ECO:0000318"/>
    <property type="project" value="GO_Central"/>
</dbReference>
<dbReference type="Gene3D" id="3.90.820.10">
    <property type="entry name" value="Structural Genomics, Unknown Function 30-nov-00 1gh9 Mol_id"/>
    <property type="match status" value="1"/>
</dbReference>
<dbReference type="InterPro" id="IPR005153">
    <property type="entry name" value="MbtH-like_dom"/>
</dbReference>
<dbReference type="InterPro" id="IPR038020">
    <property type="entry name" value="MbtH-like_sf"/>
</dbReference>
<dbReference type="InterPro" id="IPR037407">
    <property type="entry name" value="MLP_fam"/>
</dbReference>
<dbReference type="PANTHER" id="PTHR38444">
    <property type="entry name" value="ENTEROBACTIN BIOSYNTHESIS PROTEIN YBDZ"/>
    <property type="match status" value="1"/>
</dbReference>
<dbReference type="PANTHER" id="PTHR38444:SF1">
    <property type="entry name" value="ENTEROBACTIN BIOSYNTHESIS PROTEIN YBDZ"/>
    <property type="match status" value="1"/>
</dbReference>
<dbReference type="Pfam" id="PF03621">
    <property type="entry name" value="MbtH"/>
    <property type="match status" value="1"/>
</dbReference>
<dbReference type="SMART" id="SM00923">
    <property type="entry name" value="MbtH"/>
    <property type="match status" value="1"/>
</dbReference>
<dbReference type="SUPFAM" id="SSF160582">
    <property type="entry name" value="MbtH-like"/>
    <property type="match status" value="1"/>
</dbReference>
<name>YBDZ_ECOLI</name>
<gene>
    <name evidence="2" type="primary">ybdZ</name>
    <name type="ordered locus">b4511</name>
    <name type="ordered locus">JW0577</name>
</gene>
<evidence type="ECO:0000269" key="1">
    <source>
    </source>
</evidence>
<evidence type="ECO:0000303" key="2">
    <source>
    </source>
</evidence>
<evidence type="ECO:0000305" key="3"/>
<evidence type="ECO:0000305" key="4">
    <source>
    </source>
</evidence>
<evidence type="ECO:0007829" key="5">
    <source>
        <dbReference type="PDB" id="5JA1"/>
    </source>
</evidence>